<sequence length="121" mass="14728">MSRGKRPKWMIEIAIERMNILFERAEMEFERHPERSNRYVVLAKKLSTKYNTKIPDKWARRYCKRCNKFLYPGHNATVRLVNEEVNILCGECGHVMKIPYHKEKKNKRRARYESIKKRNDE</sequence>
<evidence type="ECO:0000255" key="1">
    <source>
        <dbReference type="HAMAP-Rule" id="MF_00757"/>
    </source>
</evidence>
<accession>A5UL38</accession>
<keyword id="KW-0963">Cytoplasm</keyword>
<keyword id="KW-0255">Endonuclease</keyword>
<keyword id="KW-0378">Hydrolase</keyword>
<keyword id="KW-0479">Metal-binding</keyword>
<keyword id="KW-0540">Nuclease</keyword>
<keyword id="KW-0819">tRNA processing</keyword>
<keyword id="KW-0862">Zinc</keyword>
<dbReference type="EC" id="3.1.26.5" evidence="1"/>
<dbReference type="EMBL" id="CP000678">
    <property type="protein sequence ID" value="ABQ86916.1"/>
    <property type="molecule type" value="Genomic_DNA"/>
</dbReference>
<dbReference type="RefSeq" id="WP_011954058.1">
    <property type="nucleotide sequence ID" value="NZ_CP117965.1"/>
</dbReference>
<dbReference type="SMR" id="A5UL38"/>
<dbReference type="STRING" id="420247.Msm_0711"/>
<dbReference type="EnsemblBacteria" id="ABQ86916">
    <property type="protein sequence ID" value="ABQ86916"/>
    <property type="gene ID" value="Msm_0711"/>
</dbReference>
<dbReference type="KEGG" id="msi:Msm_0711"/>
<dbReference type="PATRIC" id="fig|420247.28.peg.708"/>
<dbReference type="eggNOG" id="arCOG04345">
    <property type="taxonomic scope" value="Archaea"/>
</dbReference>
<dbReference type="HOGENOM" id="CLU_079140_3_0_2"/>
<dbReference type="Proteomes" id="UP000001992">
    <property type="component" value="Chromosome"/>
</dbReference>
<dbReference type="GO" id="GO:0005737">
    <property type="term" value="C:cytoplasm"/>
    <property type="evidence" value="ECO:0007669"/>
    <property type="project" value="UniProtKB-SubCell"/>
</dbReference>
<dbReference type="GO" id="GO:0030677">
    <property type="term" value="C:ribonuclease P complex"/>
    <property type="evidence" value="ECO:0007669"/>
    <property type="project" value="UniProtKB-UniRule"/>
</dbReference>
<dbReference type="GO" id="GO:0004526">
    <property type="term" value="F:ribonuclease P activity"/>
    <property type="evidence" value="ECO:0007669"/>
    <property type="project" value="UniProtKB-UniRule"/>
</dbReference>
<dbReference type="GO" id="GO:0008270">
    <property type="term" value="F:zinc ion binding"/>
    <property type="evidence" value="ECO:0007669"/>
    <property type="project" value="UniProtKB-UniRule"/>
</dbReference>
<dbReference type="GO" id="GO:0001682">
    <property type="term" value="P:tRNA 5'-leader removal"/>
    <property type="evidence" value="ECO:0007669"/>
    <property type="project" value="UniProtKB-UniRule"/>
</dbReference>
<dbReference type="Gene3D" id="6.20.50.20">
    <property type="match status" value="1"/>
</dbReference>
<dbReference type="Gene3D" id="1.20.5.420">
    <property type="entry name" value="Immunoglobulin FC, subunit C"/>
    <property type="match status" value="1"/>
</dbReference>
<dbReference type="HAMAP" id="MF_00757">
    <property type="entry name" value="RNase_P_4"/>
    <property type="match status" value="1"/>
</dbReference>
<dbReference type="InterPro" id="IPR016432">
    <property type="entry name" value="RNP4"/>
</dbReference>
<dbReference type="InterPro" id="IPR007175">
    <property type="entry name" value="Rpr2/Snm1/Rpp21"/>
</dbReference>
<dbReference type="PANTHER" id="PTHR14742:SF0">
    <property type="entry name" value="RIBONUCLEASE P PROTEIN SUBUNIT P21"/>
    <property type="match status" value="1"/>
</dbReference>
<dbReference type="PANTHER" id="PTHR14742">
    <property type="entry name" value="RIBONUCLEASE P SUBUNIT P21"/>
    <property type="match status" value="1"/>
</dbReference>
<dbReference type="Pfam" id="PF04032">
    <property type="entry name" value="Rpr2"/>
    <property type="match status" value="1"/>
</dbReference>
<dbReference type="PIRSF" id="PIRSF004878">
    <property type="entry name" value="RNase_P_4"/>
    <property type="match status" value="1"/>
</dbReference>
<reference key="1">
    <citation type="journal article" date="2007" name="Proc. Natl. Acad. Sci. U.S.A.">
        <title>Genomic and metabolic adaptations of Methanobrevibacter smithii to the human gut.</title>
        <authorList>
            <person name="Samuel B.S."/>
            <person name="Hansen E.E."/>
            <person name="Manchester J.K."/>
            <person name="Coutinho P.M."/>
            <person name="Henrissat B."/>
            <person name="Fulton R."/>
            <person name="Latreille P."/>
            <person name="Kim K."/>
            <person name="Wilson R.K."/>
            <person name="Gordon J.I."/>
        </authorList>
    </citation>
    <scope>NUCLEOTIDE SEQUENCE [LARGE SCALE GENOMIC DNA]</scope>
    <source>
        <strain>ATCC 35061 / DSM 861 / OCM 144 / PS</strain>
    </source>
</reference>
<comment type="function">
    <text evidence="1">Part of ribonuclease P, a protein complex that generates mature tRNA molecules by cleaving their 5'-ends.</text>
</comment>
<comment type="catalytic activity">
    <reaction evidence="1">
        <text>Endonucleolytic cleavage of RNA, removing 5'-extranucleotides from tRNA precursor.</text>
        <dbReference type="EC" id="3.1.26.5"/>
    </reaction>
</comment>
<comment type="cofactor">
    <cofactor evidence="1">
        <name>Zn(2+)</name>
        <dbReference type="ChEBI" id="CHEBI:29105"/>
    </cofactor>
    <text evidence="1">Binds 1 zinc ion per subunit.</text>
</comment>
<comment type="subunit">
    <text evidence="1">Consists of a catalytic RNA component and at least 4-5 protein subunits.</text>
</comment>
<comment type="subcellular location">
    <subcellularLocation>
        <location evidence="1">Cytoplasm</location>
    </subcellularLocation>
</comment>
<comment type="similarity">
    <text evidence="1">Belongs to the eukaryotic/archaeal RNase P protein component 4 family.</text>
</comment>
<feature type="chain" id="PRO_1000194594" description="Ribonuclease P protein component 4">
    <location>
        <begin position="1"/>
        <end position="121"/>
    </location>
</feature>
<feature type="binding site" evidence="1">
    <location>
        <position position="63"/>
    </location>
    <ligand>
        <name>Zn(2+)</name>
        <dbReference type="ChEBI" id="CHEBI:29105"/>
    </ligand>
</feature>
<feature type="binding site" evidence="1">
    <location>
        <position position="66"/>
    </location>
    <ligand>
        <name>Zn(2+)</name>
        <dbReference type="ChEBI" id="CHEBI:29105"/>
    </ligand>
</feature>
<feature type="binding site" evidence="1">
    <location>
        <position position="89"/>
    </location>
    <ligand>
        <name>Zn(2+)</name>
        <dbReference type="ChEBI" id="CHEBI:29105"/>
    </ligand>
</feature>
<feature type="binding site" evidence="1">
    <location>
        <position position="92"/>
    </location>
    <ligand>
        <name>Zn(2+)</name>
        <dbReference type="ChEBI" id="CHEBI:29105"/>
    </ligand>
</feature>
<proteinExistence type="inferred from homology"/>
<protein>
    <recommendedName>
        <fullName evidence="1">Ribonuclease P protein component 4</fullName>
        <shortName evidence="1">RNase P component 4</shortName>
        <ecNumber evidence="1">3.1.26.5</ecNumber>
    </recommendedName>
    <alternativeName>
        <fullName evidence="1">Rpp21</fullName>
    </alternativeName>
</protein>
<organism>
    <name type="scientific">Methanobrevibacter smithii (strain ATCC 35061 / DSM 861 / OCM 144 / PS)</name>
    <dbReference type="NCBI Taxonomy" id="420247"/>
    <lineage>
        <taxon>Archaea</taxon>
        <taxon>Methanobacteriati</taxon>
        <taxon>Methanobacteriota</taxon>
        <taxon>Methanomada group</taxon>
        <taxon>Methanobacteria</taxon>
        <taxon>Methanobacteriales</taxon>
        <taxon>Methanobacteriaceae</taxon>
        <taxon>Methanobrevibacter</taxon>
    </lineage>
</organism>
<name>RNP4_METS3</name>
<gene>
    <name evidence="1" type="primary">rnp4</name>
    <name type="ordered locus">Msm_0711</name>
</gene>